<proteinExistence type="inferred from homology"/>
<reference key="1">
    <citation type="journal article" date="2005" name="Nucleic Acids Res.">
        <title>Genomic blueprint of Hahella chejuensis, a marine microbe producing an algicidal agent.</title>
        <authorList>
            <person name="Jeong H."/>
            <person name="Yim J.H."/>
            <person name="Lee C."/>
            <person name="Choi S.-H."/>
            <person name="Park Y.K."/>
            <person name="Yoon S.H."/>
            <person name="Hur C.-G."/>
            <person name="Kang H.-Y."/>
            <person name="Kim D."/>
            <person name="Lee H.H."/>
            <person name="Park K.H."/>
            <person name="Park S.-H."/>
            <person name="Park H.-S."/>
            <person name="Lee H.K."/>
            <person name="Oh T.K."/>
            <person name="Kim J.F."/>
        </authorList>
    </citation>
    <scope>NUCLEOTIDE SEQUENCE [LARGE SCALE GENOMIC DNA]</scope>
    <source>
        <strain>KCTC 2396</strain>
    </source>
</reference>
<gene>
    <name evidence="1" type="primary">rpmG</name>
    <name type="ordered locus">HCH_01018</name>
</gene>
<evidence type="ECO:0000255" key="1">
    <source>
        <dbReference type="HAMAP-Rule" id="MF_00294"/>
    </source>
</evidence>
<evidence type="ECO:0000305" key="2"/>
<name>RL33_HAHCH</name>
<organism>
    <name type="scientific">Hahella chejuensis (strain KCTC 2396)</name>
    <dbReference type="NCBI Taxonomy" id="349521"/>
    <lineage>
        <taxon>Bacteria</taxon>
        <taxon>Pseudomonadati</taxon>
        <taxon>Pseudomonadota</taxon>
        <taxon>Gammaproteobacteria</taxon>
        <taxon>Oceanospirillales</taxon>
        <taxon>Hahellaceae</taxon>
        <taxon>Hahella</taxon>
    </lineage>
</organism>
<protein>
    <recommendedName>
        <fullName evidence="1">Large ribosomal subunit protein bL33</fullName>
    </recommendedName>
    <alternativeName>
        <fullName evidence="2">50S ribosomal protein L33</fullName>
    </alternativeName>
</protein>
<sequence length="51" mass="6009">MREKIRLVSSAGTGHFYTTTKNKRTMPEKMEIKKFDPVVRKHVAYKEAKIK</sequence>
<dbReference type="EMBL" id="CP000155">
    <property type="protein sequence ID" value="ABC27903.1"/>
    <property type="molecule type" value="Genomic_DNA"/>
</dbReference>
<dbReference type="RefSeq" id="WP_011394978.1">
    <property type="nucleotide sequence ID" value="NC_007645.1"/>
</dbReference>
<dbReference type="SMR" id="Q2SN71"/>
<dbReference type="STRING" id="349521.HCH_01018"/>
<dbReference type="KEGG" id="hch:HCH_01018"/>
<dbReference type="eggNOG" id="COG0267">
    <property type="taxonomic scope" value="Bacteria"/>
</dbReference>
<dbReference type="HOGENOM" id="CLU_190949_1_1_6"/>
<dbReference type="OrthoDB" id="21586at2"/>
<dbReference type="Proteomes" id="UP000000238">
    <property type="component" value="Chromosome"/>
</dbReference>
<dbReference type="GO" id="GO:0022625">
    <property type="term" value="C:cytosolic large ribosomal subunit"/>
    <property type="evidence" value="ECO:0007669"/>
    <property type="project" value="TreeGrafter"/>
</dbReference>
<dbReference type="GO" id="GO:0003735">
    <property type="term" value="F:structural constituent of ribosome"/>
    <property type="evidence" value="ECO:0007669"/>
    <property type="project" value="InterPro"/>
</dbReference>
<dbReference type="GO" id="GO:0006412">
    <property type="term" value="P:translation"/>
    <property type="evidence" value="ECO:0007669"/>
    <property type="project" value="UniProtKB-UniRule"/>
</dbReference>
<dbReference type="FunFam" id="2.20.28.120:FF:000001">
    <property type="entry name" value="50S ribosomal protein L33"/>
    <property type="match status" value="1"/>
</dbReference>
<dbReference type="Gene3D" id="2.20.28.120">
    <property type="entry name" value="Ribosomal protein L33"/>
    <property type="match status" value="1"/>
</dbReference>
<dbReference type="HAMAP" id="MF_00294">
    <property type="entry name" value="Ribosomal_bL33"/>
    <property type="match status" value="1"/>
</dbReference>
<dbReference type="InterPro" id="IPR001705">
    <property type="entry name" value="Ribosomal_bL33"/>
</dbReference>
<dbReference type="InterPro" id="IPR018264">
    <property type="entry name" value="Ribosomal_bL33_CS"/>
</dbReference>
<dbReference type="InterPro" id="IPR038584">
    <property type="entry name" value="Ribosomal_bL33_sf"/>
</dbReference>
<dbReference type="InterPro" id="IPR011332">
    <property type="entry name" value="Ribosomal_zn-bd"/>
</dbReference>
<dbReference type="NCBIfam" id="NF001860">
    <property type="entry name" value="PRK00595.1"/>
    <property type="match status" value="1"/>
</dbReference>
<dbReference type="NCBIfam" id="TIGR01023">
    <property type="entry name" value="rpmG_bact"/>
    <property type="match status" value="1"/>
</dbReference>
<dbReference type="PANTHER" id="PTHR15238">
    <property type="entry name" value="54S RIBOSOMAL PROTEIN L39, MITOCHONDRIAL"/>
    <property type="match status" value="1"/>
</dbReference>
<dbReference type="PANTHER" id="PTHR15238:SF1">
    <property type="entry name" value="LARGE RIBOSOMAL SUBUNIT PROTEIN BL33M"/>
    <property type="match status" value="1"/>
</dbReference>
<dbReference type="Pfam" id="PF00471">
    <property type="entry name" value="Ribosomal_L33"/>
    <property type="match status" value="1"/>
</dbReference>
<dbReference type="SUPFAM" id="SSF57829">
    <property type="entry name" value="Zn-binding ribosomal proteins"/>
    <property type="match status" value="1"/>
</dbReference>
<dbReference type="PROSITE" id="PS00582">
    <property type="entry name" value="RIBOSOMAL_L33"/>
    <property type="match status" value="1"/>
</dbReference>
<feature type="chain" id="PRO_0000356478" description="Large ribosomal subunit protein bL33">
    <location>
        <begin position="1"/>
        <end position="51"/>
    </location>
</feature>
<comment type="similarity">
    <text evidence="1">Belongs to the bacterial ribosomal protein bL33 family.</text>
</comment>
<keyword id="KW-1185">Reference proteome</keyword>
<keyword id="KW-0687">Ribonucleoprotein</keyword>
<keyword id="KW-0689">Ribosomal protein</keyword>
<accession>Q2SN71</accession>